<keyword id="KW-0012">Acyltransferase</keyword>
<keyword id="KW-0450">Lipoyl</keyword>
<keyword id="KW-1185">Reference proteome</keyword>
<keyword id="KW-0808">Transferase</keyword>
<gene>
    <name type="primary">pdhC</name>
    <name type="synonym">pdhB</name>
    <name type="ordered locus">R01447</name>
    <name type="ORF">SMc01032</name>
</gene>
<accession>Q9R9N3</accession>
<feature type="chain" id="PRO_0000162284" description="Dihydrolipoyllysine-residue acetyltransferase component of pyruvate dehydrogenase complex">
    <location>
        <begin position="1"/>
        <end position="447"/>
    </location>
</feature>
<feature type="domain" description="Lipoyl-binding" evidence="3">
    <location>
        <begin position="2"/>
        <end position="78"/>
    </location>
</feature>
<feature type="domain" description="Peripheral subunit-binding (PSBD)" evidence="4">
    <location>
        <begin position="142"/>
        <end position="179"/>
    </location>
</feature>
<feature type="region of interest" description="Disordered" evidence="5">
    <location>
        <begin position="91"/>
        <end position="140"/>
    </location>
</feature>
<feature type="compositionally biased region" description="Low complexity" evidence="5">
    <location>
        <begin position="108"/>
        <end position="134"/>
    </location>
</feature>
<feature type="active site" evidence="2">
    <location>
        <position position="420"/>
    </location>
</feature>
<feature type="modified residue" description="N6-lipoyllysine" evidence="1 3">
    <location>
        <position position="43"/>
    </location>
</feature>
<organism>
    <name type="scientific">Rhizobium meliloti (strain 1021)</name>
    <name type="common">Ensifer meliloti</name>
    <name type="synonym">Sinorhizobium meliloti</name>
    <dbReference type="NCBI Taxonomy" id="266834"/>
    <lineage>
        <taxon>Bacteria</taxon>
        <taxon>Pseudomonadati</taxon>
        <taxon>Pseudomonadota</taxon>
        <taxon>Alphaproteobacteria</taxon>
        <taxon>Hyphomicrobiales</taxon>
        <taxon>Rhizobiaceae</taxon>
        <taxon>Sinorhizobium/Ensifer group</taxon>
        <taxon>Sinorhizobium</taxon>
    </lineage>
</organism>
<protein>
    <recommendedName>
        <fullName>Dihydrolipoyllysine-residue acetyltransferase component of pyruvate dehydrogenase complex</fullName>
        <ecNumber>2.3.1.12</ecNumber>
    </recommendedName>
    <alternativeName>
        <fullName>Dihydrolipoamide acetyltransferase component of pyruvate dehydrogenase complex</fullName>
    </alternativeName>
    <alternativeName>
        <fullName>E2</fullName>
    </alternativeName>
</protein>
<name>ODP2_RHIME</name>
<comment type="function">
    <text evidence="1">The pyruvate dehydrogenase complex catalyzes the overall conversion of pyruvate to acetyl-CoA and CO(2). It contains multiple copies of three enzymatic components: pyruvate dehydrogenase (E1), dihydrolipoamide acetyltransferase (E2) and lipoamide dehydrogenase (E3) (By similarity).</text>
</comment>
<comment type="catalytic activity">
    <reaction>
        <text>N(6)-[(R)-dihydrolipoyl]-L-lysyl-[protein] + acetyl-CoA = N(6)-[(R)-S(8)-acetyldihydrolipoyl]-L-lysyl-[protein] + CoA</text>
        <dbReference type="Rhea" id="RHEA:17017"/>
        <dbReference type="Rhea" id="RHEA-COMP:10475"/>
        <dbReference type="Rhea" id="RHEA-COMP:10478"/>
        <dbReference type="ChEBI" id="CHEBI:57287"/>
        <dbReference type="ChEBI" id="CHEBI:57288"/>
        <dbReference type="ChEBI" id="CHEBI:83100"/>
        <dbReference type="ChEBI" id="CHEBI:83111"/>
        <dbReference type="EC" id="2.3.1.12"/>
    </reaction>
</comment>
<comment type="cofactor">
    <cofactor evidence="1">
        <name>(R)-lipoate</name>
        <dbReference type="ChEBI" id="CHEBI:83088"/>
    </cofactor>
    <text evidence="1">Binds 1 lipoyl cofactor covalently.</text>
</comment>
<comment type="subunit">
    <text evidence="1">Forms a 24-polypeptide structural core with octahedral symmetry.</text>
</comment>
<comment type="similarity">
    <text evidence="6">Belongs to the 2-oxoacid dehydrogenase family.</text>
</comment>
<evidence type="ECO:0000250" key="1"/>
<evidence type="ECO:0000255" key="2"/>
<evidence type="ECO:0000255" key="3">
    <source>
        <dbReference type="PROSITE-ProRule" id="PRU01066"/>
    </source>
</evidence>
<evidence type="ECO:0000255" key="4">
    <source>
        <dbReference type="PROSITE-ProRule" id="PRU01170"/>
    </source>
</evidence>
<evidence type="ECO:0000256" key="5">
    <source>
        <dbReference type="SAM" id="MobiDB-lite"/>
    </source>
</evidence>
<evidence type="ECO:0000305" key="6"/>
<sequence length="447" mass="46140">MPINITMPALSPTMEEGNLAKWLVKEGDKVKSGDVIAEIETDKATMEVEAVDEGTVAKIVVPAGTEGVKVNALIAVLAAEGEDVATAAKGGNGAAGAVPAPKPKETAETAPAAAPAPAAAPAPQAAAPASPAPADGEGKRIFSSPLARRLAKEAGIDLSAIAGSGPHGRVVKKDVETAVSGGAAKPAGAPAAAPAPATLAKGMSEDAVLKLFEPGSYELVPHDGMRKTIAKRLVESKQTIPHFYVSVDCELDALMALRAQLNAAAPEKDGKPVYKLSVNDMVIKALALALRDVPDANVSWTDQNMVKHKHADVGVAVSIPGGLITPIVRQAELKSLSAISNEMKDLGKRAKERKLKPEEYQGGTTAVSNMGMMGVKDFAAVVNPPHATILAVGAGEDRVVVRNKEMVIANVMTVTLSTDHRCVDGALGAELLAAFKRYIENPMGMLV</sequence>
<reference key="1">
    <citation type="journal article" date="2000" name="Mol. Plant Microbe Interact.">
        <title>Symbiotic induction of pyruvate dehydrogenase genes from Sinorhizobium meliloti.</title>
        <authorList>
            <person name="Cabanes D."/>
            <person name="Boistard P."/>
            <person name="Batut J."/>
        </authorList>
    </citation>
    <scope>NUCLEOTIDE SEQUENCE [GENOMIC DNA]</scope>
    <source>
        <strain>RCR2011 / SU47</strain>
    </source>
</reference>
<reference key="2">
    <citation type="journal article" date="2001" name="Proc. Natl. Acad. Sci. U.S.A.">
        <title>Analysis of the chromosome sequence of the legume symbiont Sinorhizobium meliloti strain 1021.</title>
        <authorList>
            <person name="Capela D."/>
            <person name="Barloy-Hubler F."/>
            <person name="Gouzy J."/>
            <person name="Bothe G."/>
            <person name="Ampe F."/>
            <person name="Batut J."/>
            <person name="Boistard P."/>
            <person name="Becker A."/>
            <person name="Boutry M."/>
            <person name="Cadieu E."/>
            <person name="Dreano S."/>
            <person name="Gloux S."/>
            <person name="Godrie T."/>
            <person name="Goffeau A."/>
            <person name="Kahn D."/>
            <person name="Kiss E."/>
            <person name="Lelaure V."/>
            <person name="Masuy D."/>
            <person name="Pohl T."/>
            <person name="Portetelle D."/>
            <person name="Puehler A."/>
            <person name="Purnelle B."/>
            <person name="Ramsperger U."/>
            <person name="Renard C."/>
            <person name="Thebault P."/>
            <person name="Vandenbol M."/>
            <person name="Weidner S."/>
            <person name="Galibert F."/>
        </authorList>
    </citation>
    <scope>NUCLEOTIDE SEQUENCE [LARGE SCALE GENOMIC DNA]</scope>
    <source>
        <strain>1021</strain>
    </source>
</reference>
<reference key="3">
    <citation type="journal article" date="2001" name="Science">
        <title>The composite genome of the legume symbiont Sinorhizobium meliloti.</title>
        <authorList>
            <person name="Galibert F."/>
            <person name="Finan T.M."/>
            <person name="Long S.R."/>
            <person name="Puehler A."/>
            <person name="Abola P."/>
            <person name="Ampe F."/>
            <person name="Barloy-Hubler F."/>
            <person name="Barnett M.J."/>
            <person name="Becker A."/>
            <person name="Boistard P."/>
            <person name="Bothe G."/>
            <person name="Boutry M."/>
            <person name="Bowser L."/>
            <person name="Buhrmester J."/>
            <person name="Cadieu E."/>
            <person name="Capela D."/>
            <person name="Chain P."/>
            <person name="Cowie A."/>
            <person name="Davis R.W."/>
            <person name="Dreano S."/>
            <person name="Federspiel N.A."/>
            <person name="Fisher R.F."/>
            <person name="Gloux S."/>
            <person name="Godrie T."/>
            <person name="Goffeau A."/>
            <person name="Golding B."/>
            <person name="Gouzy J."/>
            <person name="Gurjal M."/>
            <person name="Hernandez-Lucas I."/>
            <person name="Hong A."/>
            <person name="Huizar L."/>
            <person name="Hyman R.W."/>
            <person name="Jones T."/>
            <person name="Kahn D."/>
            <person name="Kahn M.L."/>
            <person name="Kalman S."/>
            <person name="Keating D.H."/>
            <person name="Kiss E."/>
            <person name="Komp C."/>
            <person name="Lelaure V."/>
            <person name="Masuy D."/>
            <person name="Palm C."/>
            <person name="Peck M.C."/>
            <person name="Pohl T.M."/>
            <person name="Portetelle D."/>
            <person name="Purnelle B."/>
            <person name="Ramsperger U."/>
            <person name="Surzycki R."/>
            <person name="Thebault P."/>
            <person name="Vandenbol M."/>
            <person name="Vorhoelter F.J."/>
            <person name="Weidner S."/>
            <person name="Wells D.H."/>
            <person name="Wong K."/>
            <person name="Yeh K.-C."/>
            <person name="Batut J."/>
        </authorList>
    </citation>
    <scope>NUCLEOTIDE SEQUENCE [LARGE SCALE GENOMIC DNA]</scope>
    <source>
        <strain>1021</strain>
    </source>
</reference>
<proteinExistence type="inferred from homology"/>
<dbReference type="EC" id="2.3.1.12"/>
<dbReference type="EMBL" id="AF190792">
    <property type="protein sequence ID" value="AAF04589.1"/>
    <property type="molecule type" value="Genomic_DNA"/>
</dbReference>
<dbReference type="EMBL" id="AL591688">
    <property type="protein sequence ID" value="CAC46026.1"/>
    <property type="molecule type" value="Genomic_DNA"/>
</dbReference>
<dbReference type="RefSeq" id="NP_385553.1">
    <property type="nucleotide sequence ID" value="NC_003047.1"/>
</dbReference>
<dbReference type="RefSeq" id="WP_010969228.1">
    <property type="nucleotide sequence ID" value="NC_003047.1"/>
</dbReference>
<dbReference type="SMR" id="Q9R9N3"/>
<dbReference type="EnsemblBacteria" id="CAC46026">
    <property type="protein sequence ID" value="CAC46026"/>
    <property type="gene ID" value="SMc01032"/>
</dbReference>
<dbReference type="KEGG" id="sme:SMc01032"/>
<dbReference type="PATRIC" id="fig|266834.11.peg.2867"/>
<dbReference type="eggNOG" id="COG0508">
    <property type="taxonomic scope" value="Bacteria"/>
</dbReference>
<dbReference type="HOGENOM" id="CLU_016733_10_2_5"/>
<dbReference type="OrthoDB" id="9805770at2"/>
<dbReference type="Proteomes" id="UP000001976">
    <property type="component" value="Chromosome"/>
</dbReference>
<dbReference type="GO" id="GO:0045254">
    <property type="term" value="C:pyruvate dehydrogenase complex"/>
    <property type="evidence" value="ECO:0007669"/>
    <property type="project" value="InterPro"/>
</dbReference>
<dbReference type="GO" id="GO:0004742">
    <property type="term" value="F:dihydrolipoyllysine-residue acetyltransferase activity"/>
    <property type="evidence" value="ECO:0007669"/>
    <property type="project" value="UniProtKB-EC"/>
</dbReference>
<dbReference type="GO" id="GO:0006086">
    <property type="term" value="P:pyruvate decarboxylation to acetyl-CoA"/>
    <property type="evidence" value="ECO:0007669"/>
    <property type="project" value="InterPro"/>
</dbReference>
<dbReference type="CDD" id="cd06849">
    <property type="entry name" value="lipoyl_domain"/>
    <property type="match status" value="1"/>
</dbReference>
<dbReference type="FunFam" id="2.40.50.100:FF:000010">
    <property type="entry name" value="Acetyltransferase component of pyruvate dehydrogenase complex"/>
    <property type="match status" value="1"/>
</dbReference>
<dbReference type="FunFam" id="3.30.559.10:FF:000003">
    <property type="entry name" value="Acetyltransferase component of pyruvate dehydrogenase complex"/>
    <property type="match status" value="1"/>
</dbReference>
<dbReference type="Gene3D" id="2.40.50.100">
    <property type="match status" value="1"/>
</dbReference>
<dbReference type="Gene3D" id="3.30.559.10">
    <property type="entry name" value="Chloramphenicol acetyltransferase-like domain"/>
    <property type="match status" value="1"/>
</dbReference>
<dbReference type="Gene3D" id="4.10.320.10">
    <property type="entry name" value="E3-binding domain"/>
    <property type="match status" value="1"/>
</dbReference>
<dbReference type="InterPro" id="IPR003016">
    <property type="entry name" value="2-oxoA_DH_lipoyl-BS"/>
</dbReference>
<dbReference type="InterPro" id="IPR001078">
    <property type="entry name" value="2-oxoacid_DH_actylTfrase"/>
</dbReference>
<dbReference type="InterPro" id="IPR000089">
    <property type="entry name" value="Biotin_lipoyl"/>
</dbReference>
<dbReference type="InterPro" id="IPR023213">
    <property type="entry name" value="CAT-like_dom_sf"/>
</dbReference>
<dbReference type="InterPro" id="IPR045257">
    <property type="entry name" value="E2/Pdx1"/>
</dbReference>
<dbReference type="InterPro" id="IPR036625">
    <property type="entry name" value="E3-bd_dom_sf"/>
</dbReference>
<dbReference type="InterPro" id="IPR006257">
    <property type="entry name" value="LAT1"/>
</dbReference>
<dbReference type="InterPro" id="IPR004167">
    <property type="entry name" value="PSBD"/>
</dbReference>
<dbReference type="InterPro" id="IPR011053">
    <property type="entry name" value="Single_hybrid_motif"/>
</dbReference>
<dbReference type="NCBIfam" id="TIGR01349">
    <property type="entry name" value="PDHac_trf_mito"/>
    <property type="match status" value="1"/>
</dbReference>
<dbReference type="PANTHER" id="PTHR23151">
    <property type="entry name" value="DIHYDROLIPOAMIDE ACETYL/SUCCINYL-TRANSFERASE-RELATED"/>
    <property type="match status" value="1"/>
</dbReference>
<dbReference type="PANTHER" id="PTHR23151:SF90">
    <property type="entry name" value="DIHYDROLIPOYLLYSINE-RESIDUE ACETYLTRANSFERASE COMPONENT OF PYRUVATE DEHYDROGENASE COMPLEX, MITOCHONDRIAL-RELATED"/>
    <property type="match status" value="1"/>
</dbReference>
<dbReference type="Pfam" id="PF00198">
    <property type="entry name" value="2-oxoacid_dh"/>
    <property type="match status" value="1"/>
</dbReference>
<dbReference type="Pfam" id="PF00364">
    <property type="entry name" value="Biotin_lipoyl"/>
    <property type="match status" value="1"/>
</dbReference>
<dbReference type="Pfam" id="PF02817">
    <property type="entry name" value="E3_binding"/>
    <property type="match status" value="1"/>
</dbReference>
<dbReference type="SUPFAM" id="SSF52777">
    <property type="entry name" value="CoA-dependent acyltransferases"/>
    <property type="match status" value="1"/>
</dbReference>
<dbReference type="SUPFAM" id="SSF47005">
    <property type="entry name" value="Peripheral subunit-binding domain of 2-oxo acid dehydrogenase complex"/>
    <property type="match status" value="1"/>
</dbReference>
<dbReference type="SUPFAM" id="SSF51230">
    <property type="entry name" value="Single hybrid motif"/>
    <property type="match status" value="1"/>
</dbReference>
<dbReference type="PROSITE" id="PS50968">
    <property type="entry name" value="BIOTINYL_LIPOYL"/>
    <property type="match status" value="1"/>
</dbReference>
<dbReference type="PROSITE" id="PS00189">
    <property type="entry name" value="LIPOYL"/>
    <property type="match status" value="1"/>
</dbReference>
<dbReference type="PROSITE" id="PS51826">
    <property type="entry name" value="PSBD"/>
    <property type="match status" value="1"/>
</dbReference>